<organism>
    <name type="scientific">Synechococcus elongatus (strain ATCC 33912 / PCC 7942 / FACHB-805)</name>
    <name type="common">Anacystis nidulans R2</name>
    <dbReference type="NCBI Taxonomy" id="1140"/>
    <lineage>
        <taxon>Bacteria</taxon>
        <taxon>Bacillati</taxon>
        <taxon>Cyanobacteriota</taxon>
        <taxon>Cyanophyceae</taxon>
        <taxon>Synechococcales</taxon>
        <taxon>Synechococcaceae</taxon>
        <taxon>Synechococcus</taxon>
    </lineage>
</organism>
<keyword id="KW-0066">ATP synthesis</keyword>
<keyword id="KW-0138">CF(0)</keyword>
<keyword id="KW-0375">Hydrogen ion transport</keyword>
<keyword id="KW-0406">Ion transport</keyword>
<keyword id="KW-0446">Lipid-binding</keyword>
<keyword id="KW-0472">Membrane</keyword>
<keyword id="KW-1185">Reference proteome</keyword>
<keyword id="KW-0793">Thylakoid</keyword>
<keyword id="KW-0812">Transmembrane</keyword>
<keyword id="KW-1133">Transmembrane helix</keyword>
<keyword id="KW-0813">Transport</keyword>
<accession>Q31RF5</accession>
<comment type="function">
    <text evidence="1">F(1)F(0) ATP synthase produces ATP from ADP in the presence of a proton or sodium gradient. F-type ATPases consist of two structural domains, F(1) containing the extramembraneous catalytic core and F(0) containing the membrane proton channel, linked together by a central stalk and a peripheral stalk. During catalysis, ATP synthesis in the catalytic domain of F(1) is coupled via a rotary mechanism of the central stalk subunits to proton translocation.</text>
</comment>
<comment type="function">
    <text evidence="1">Key component of the F(0) channel; it plays a direct role in translocation across the membrane. A homomeric c-ring of between 10-14 subunits forms the central stalk rotor element with the F(1) delta and epsilon subunits.</text>
</comment>
<comment type="subunit">
    <text evidence="1">F-type ATPases have 2 components, F(1) - the catalytic core - and F(0) - the membrane proton channel. F(1) has five subunits: alpha(3), beta(3), gamma(1), delta(1), epsilon(1). F(0) has four main subunits: a(1), b(1), b'(1) and c(10-14). The alpha and beta chains form an alternating ring which encloses part of the gamma chain. F(1) is attached to F(0) by a central stalk formed by the gamma and epsilon chains, while a peripheral stalk is formed by the delta, b and b' chains.</text>
</comment>
<comment type="subcellular location">
    <subcellularLocation>
        <location evidence="1">Cellular thylakoid membrane</location>
        <topology evidence="1">Multi-pass membrane protein</topology>
    </subcellularLocation>
</comment>
<comment type="similarity">
    <text evidence="1">Belongs to the ATPase C chain family.</text>
</comment>
<reference key="1">
    <citation type="submission" date="2005-08" db="EMBL/GenBank/DDBJ databases">
        <title>Complete sequence of chromosome 1 of Synechococcus elongatus PCC 7942.</title>
        <authorList>
            <consortium name="US DOE Joint Genome Institute"/>
            <person name="Copeland A."/>
            <person name="Lucas S."/>
            <person name="Lapidus A."/>
            <person name="Barry K."/>
            <person name="Detter J.C."/>
            <person name="Glavina T."/>
            <person name="Hammon N."/>
            <person name="Israni S."/>
            <person name="Pitluck S."/>
            <person name="Schmutz J."/>
            <person name="Larimer F."/>
            <person name="Land M."/>
            <person name="Kyrpides N."/>
            <person name="Lykidis A."/>
            <person name="Golden S."/>
            <person name="Richardson P."/>
        </authorList>
    </citation>
    <scope>NUCLEOTIDE SEQUENCE [LARGE SCALE GENOMIC DNA]</scope>
    <source>
        <strain>ATCC 33912 / PCC 7942 / FACHB-805</strain>
    </source>
</reference>
<name>ATPL_SYNE7</name>
<gene>
    <name evidence="1" type="primary">atpE</name>
    <name evidence="1" type="synonym">atpH</name>
    <name type="ordered locus">Synpcc7942_0332</name>
</gene>
<dbReference type="EMBL" id="CP000100">
    <property type="protein sequence ID" value="ABB56364.1"/>
    <property type="molecule type" value="Genomic_DNA"/>
</dbReference>
<dbReference type="RefSeq" id="WP_011243493.1">
    <property type="nucleotide sequence ID" value="NZ_JACJTX010000002.1"/>
</dbReference>
<dbReference type="SMR" id="Q31RF5"/>
<dbReference type="STRING" id="1140.Synpcc7942_0332"/>
<dbReference type="PaxDb" id="1140-Synpcc7942_0332"/>
<dbReference type="GeneID" id="72429148"/>
<dbReference type="KEGG" id="syf:Synpcc7942_0332"/>
<dbReference type="eggNOG" id="COG0636">
    <property type="taxonomic scope" value="Bacteria"/>
</dbReference>
<dbReference type="HOGENOM" id="CLU_148047_2_0_3"/>
<dbReference type="OrthoDB" id="9810379at2"/>
<dbReference type="BioCyc" id="MetaCyc:SYNPCC7942_0332-MONOMER"/>
<dbReference type="BioCyc" id="SYNEL:SYNPCC7942_0332-MONOMER"/>
<dbReference type="Proteomes" id="UP000889800">
    <property type="component" value="Chromosome"/>
</dbReference>
<dbReference type="GO" id="GO:0031676">
    <property type="term" value="C:plasma membrane-derived thylakoid membrane"/>
    <property type="evidence" value="ECO:0007669"/>
    <property type="project" value="UniProtKB-SubCell"/>
</dbReference>
<dbReference type="GO" id="GO:0045259">
    <property type="term" value="C:proton-transporting ATP synthase complex"/>
    <property type="evidence" value="ECO:0007669"/>
    <property type="project" value="UniProtKB-KW"/>
</dbReference>
<dbReference type="GO" id="GO:0033177">
    <property type="term" value="C:proton-transporting two-sector ATPase complex, proton-transporting domain"/>
    <property type="evidence" value="ECO:0007669"/>
    <property type="project" value="InterPro"/>
</dbReference>
<dbReference type="GO" id="GO:0008289">
    <property type="term" value="F:lipid binding"/>
    <property type="evidence" value="ECO:0007669"/>
    <property type="project" value="UniProtKB-KW"/>
</dbReference>
<dbReference type="GO" id="GO:0046933">
    <property type="term" value="F:proton-transporting ATP synthase activity, rotational mechanism"/>
    <property type="evidence" value="ECO:0007669"/>
    <property type="project" value="UniProtKB-UniRule"/>
</dbReference>
<dbReference type="CDD" id="cd18183">
    <property type="entry name" value="ATP-synt_Fo_c_ATPH"/>
    <property type="match status" value="1"/>
</dbReference>
<dbReference type="FunFam" id="1.20.20.10:FF:000001">
    <property type="entry name" value="ATP synthase subunit c, chloroplastic"/>
    <property type="match status" value="1"/>
</dbReference>
<dbReference type="Gene3D" id="1.20.20.10">
    <property type="entry name" value="F1F0 ATP synthase subunit C"/>
    <property type="match status" value="1"/>
</dbReference>
<dbReference type="HAMAP" id="MF_01396">
    <property type="entry name" value="ATP_synth_c_bact"/>
    <property type="match status" value="1"/>
</dbReference>
<dbReference type="InterPro" id="IPR005953">
    <property type="entry name" value="ATP_synth_csu_bac/chlpt"/>
</dbReference>
<dbReference type="InterPro" id="IPR000454">
    <property type="entry name" value="ATP_synth_F0_csu"/>
</dbReference>
<dbReference type="InterPro" id="IPR020537">
    <property type="entry name" value="ATP_synth_F0_csu_DDCD_BS"/>
</dbReference>
<dbReference type="InterPro" id="IPR038662">
    <property type="entry name" value="ATP_synth_F0_csu_sf"/>
</dbReference>
<dbReference type="InterPro" id="IPR002379">
    <property type="entry name" value="ATPase_proteolipid_c-like_dom"/>
</dbReference>
<dbReference type="InterPro" id="IPR035921">
    <property type="entry name" value="F/V-ATP_Csub_sf"/>
</dbReference>
<dbReference type="NCBIfam" id="TIGR01260">
    <property type="entry name" value="ATP_synt_c"/>
    <property type="match status" value="1"/>
</dbReference>
<dbReference type="NCBIfam" id="NF005608">
    <property type="entry name" value="PRK07354.1"/>
    <property type="match status" value="1"/>
</dbReference>
<dbReference type="PANTHER" id="PTHR10031">
    <property type="entry name" value="ATP SYNTHASE LIPID-BINDING PROTEIN, MITOCHONDRIAL"/>
    <property type="match status" value="1"/>
</dbReference>
<dbReference type="PANTHER" id="PTHR10031:SF0">
    <property type="entry name" value="ATPASE PROTEIN 9"/>
    <property type="match status" value="1"/>
</dbReference>
<dbReference type="Pfam" id="PF00137">
    <property type="entry name" value="ATP-synt_C"/>
    <property type="match status" value="1"/>
</dbReference>
<dbReference type="PRINTS" id="PR00124">
    <property type="entry name" value="ATPASEC"/>
</dbReference>
<dbReference type="SUPFAM" id="SSF81333">
    <property type="entry name" value="F1F0 ATP synthase subunit C"/>
    <property type="match status" value="1"/>
</dbReference>
<dbReference type="PROSITE" id="PS00605">
    <property type="entry name" value="ATPASE_C"/>
    <property type="match status" value="1"/>
</dbReference>
<proteinExistence type="inferred from homology"/>
<protein>
    <recommendedName>
        <fullName evidence="1">ATP synthase subunit c</fullName>
    </recommendedName>
    <alternativeName>
        <fullName evidence="1">ATP synthase F(0) sector subunit c</fullName>
    </alternativeName>
    <alternativeName>
        <fullName evidence="1">F-type ATPase subunit c</fullName>
        <shortName evidence="1">F-ATPase subunit c</shortName>
    </alternativeName>
    <alternativeName>
        <fullName evidence="1">Lipid-binding protein</fullName>
    </alternativeName>
</protein>
<sequence>MDSLTSAASVLAAALAVGLAAIGPGIGQGSAAGQAVEGIARQPEAEGKIRGTLLLSLAFMEALTIYGLVVALVLLFANPFA</sequence>
<feature type="chain" id="PRO_5000100969" description="ATP synthase subunit c">
    <location>
        <begin position="1"/>
        <end position="81"/>
    </location>
</feature>
<feature type="transmembrane region" description="Helical" evidence="1">
    <location>
        <begin position="7"/>
        <end position="27"/>
    </location>
</feature>
<feature type="transmembrane region" description="Helical" evidence="1">
    <location>
        <begin position="57"/>
        <end position="77"/>
    </location>
</feature>
<feature type="site" description="Reversibly protonated during proton transport" evidence="1">
    <location>
        <position position="61"/>
    </location>
</feature>
<evidence type="ECO:0000255" key="1">
    <source>
        <dbReference type="HAMAP-Rule" id="MF_01396"/>
    </source>
</evidence>